<reference key="1">
    <citation type="journal article" date="1995" name="Plant Cell">
        <title>Interactions between distinct types of DNA binding proteins enhance binding to ocs element promoter sequences.</title>
        <authorList>
            <person name="Zhang B."/>
            <person name="Chen W."/>
            <person name="Foley R.C."/>
            <person name="Buettner M."/>
            <person name="Singh K.B."/>
        </authorList>
    </citation>
    <scope>NUCLEOTIDE SEQUENCE [MRNA]</scope>
    <scope>TISSUE SPECIFICITY</scope>
    <scope>INTERACTION WITH OBF4 AND OBF5</scope>
    <source>
        <strain>cv. Columbia</strain>
    </source>
</reference>
<reference key="2">
    <citation type="journal article" date="2000" name="Nature">
        <title>Sequence and analysis of chromosome 3 of the plant Arabidopsis thaliana.</title>
        <authorList>
            <person name="Salanoubat M."/>
            <person name="Lemcke K."/>
            <person name="Rieger M."/>
            <person name="Ansorge W."/>
            <person name="Unseld M."/>
            <person name="Fartmann B."/>
            <person name="Valle G."/>
            <person name="Bloecker H."/>
            <person name="Perez-Alonso M."/>
            <person name="Obermaier B."/>
            <person name="Delseny M."/>
            <person name="Boutry M."/>
            <person name="Grivell L.A."/>
            <person name="Mache R."/>
            <person name="Puigdomenech P."/>
            <person name="De Simone V."/>
            <person name="Choisne N."/>
            <person name="Artiguenave F."/>
            <person name="Robert C."/>
            <person name="Brottier P."/>
            <person name="Wincker P."/>
            <person name="Cattolico L."/>
            <person name="Weissenbach J."/>
            <person name="Saurin W."/>
            <person name="Quetier F."/>
            <person name="Schaefer M."/>
            <person name="Mueller-Auer S."/>
            <person name="Gabel C."/>
            <person name="Fuchs M."/>
            <person name="Benes V."/>
            <person name="Wurmbach E."/>
            <person name="Drzonek H."/>
            <person name="Erfle H."/>
            <person name="Jordan N."/>
            <person name="Bangert S."/>
            <person name="Wiedelmann R."/>
            <person name="Kranz H."/>
            <person name="Voss H."/>
            <person name="Holland R."/>
            <person name="Brandt P."/>
            <person name="Nyakatura G."/>
            <person name="Vezzi A."/>
            <person name="D'Angelo M."/>
            <person name="Pallavicini A."/>
            <person name="Toppo S."/>
            <person name="Simionati B."/>
            <person name="Conrad A."/>
            <person name="Hornischer K."/>
            <person name="Kauer G."/>
            <person name="Loehnert T.-H."/>
            <person name="Nordsiek G."/>
            <person name="Reichelt J."/>
            <person name="Scharfe M."/>
            <person name="Schoen O."/>
            <person name="Bargues M."/>
            <person name="Terol J."/>
            <person name="Climent J."/>
            <person name="Navarro P."/>
            <person name="Collado C."/>
            <person name="Perez-Perez A."/>
            <person name="Ottenwaelder B."/>
            <person name="Duchemin D."/>
            <person name="Cooke R."/>
            <person name="Laudie M."/>
            <person name="Berger-Llauro C."/>
            <person name="Purnelle B."/>
            <person name="Masuy D."/>
            <person name="de Haan M."/>
            <person name="Maarse A.C."/>
            <person name="Alcaraz J.-P."/>
            <person name="Cottet A."/>
            <person name="Casacuberta E."/>
            <person name="Monfort A."/>
            <person name="Argiriou A."/>
            <person name="Flores M."/>
            <person name="Liguori R."/>
            <person name="Vitale D."/>
            <person name="Mannhaupt G."/>
            <person name="Haase D."/>
            <person name="Schoof H."/>
            <person name="Rudd S."/>
            <person name="Zaccaria P."/>
            <person name="Mewes H.-W."/>
            <person name="Mayer K.F.X."/>
            <person name="Kaul S."/>
            <person name="Town C.D."/>
            <person name="Koo H.L."/>
            <person name="Tallon L.J."/>
            <person name="Jenkins J."/>
            <person name="Rooney T."/>
            <person name="Rizzo M."/>
            <person name="Walts A."/>
            <person name="Utterback T."/>
            <person name="Fujii C.Y."/>
            <person name="Shea T.P."/>
            <person name="Creasy T.H."/>
            <person name="Haas B."/>
            <person name="Maiti R."/>
            <person name="Wu D."/>
            <person name="Peterson J."/>
            <person name="Van Aken S."/>
            <person name="Pai G."/>
            <person name="Militscher J."/>
            <person name="Sellers P."/>
            <person name="Gill J.E."/>
            <person name="Feldblyum T.V."/>
            <person name="Preuss D."/>
            <person name="Lin X."/>
            <person name="Nierman W.C."/>
            <person name="Salzberg S.L."/>
            <person name="White O."/>
            <person name="Venter J.C."/>
            <person name="Fraser C.M."/>
            <person name="Kaneko T."/>
            <person name="Nakamura Y."/>
            <person name="Sato S."/>
            <person name="Kato T."/>
            <person name="Asamizu E."/>
            <person name="Sasamoto S."/>
            <person name="Kimura T."/>
            <person name="Idesawa K."/>
            <person name="Kawashima K."/>
            <person name="Kishida Y."/>
            <person name="Kiyokawa C."/>
            <person name="Kohara M."/>
            <person name="Matsumoto M."/>
            <person name="Matsuno A."/>
            <person name="Muraki A."/>
            <person name="Nakayama S."/>
            <person name="Nakazaki N."/>
            <person name="Shinpo S."/>
            <person name="Takeuchi C."/>
            <person name="Wada T."/>
            <person name="Watanabe A."/>
            <person name="Yamada M."/>
            <person name="Yasuda M."/>
            <person name="Tabata S."/>
        </authorList>
    </citation>
    <scope>NUCLEOTIDE SEQUENCE [LARGE SCALE GENOMIC DNA]</scope>
    <source>
        <strain>cv. Columbia</strain>
    </source>
</reference>
<reference key="3">
    <citation type="journal article" date="2017" name="Plant J.">
        <title>Araport11: a complete reannotation of the Arabidopsis thaliana reference genome.</title>
        <authorList>
            <person name="Cheng C.Y."/>
            <person name="Krishnakumar V."/>
            <person name="Chan A.P."/>
            <person name="Thibaud-Nissen F."/>
            <person name="Schobel S."/>
            <person name="Town C.D."/>
        </authorList>
    </citation>
    <scope>GENOME REANNOTATION</scope>
    <source>
        <strain>cv. Columbia</strain>
    </source>
</reference>
<reference key="4">
    <citation type="journal article" date="2000" name="Plant J.">
        <title>Characterization of salicylic acid-responsive, Arabidopsis Dof domain proteins: overexpression of OBP3 leads to growth defects.</title>
        <authorList>
            <person name="Kang H.-G."/>
            <person name="Singh K.B."/>
        </authorList>
    </citation>
    <scope>TISSUE SPECIFICITY</scope>
    <scope>INDUCTION</scope>
</reference>
<reference key="5">
    <citation type="journal article" date="2002" name="Trends Plant Sci.">
        <title>The Dof family of plant transcription factors.</title>
        <authorList>
            <person name="Yanagisawa S."/>
        </authorList>
    </citation>
    <scope>GENE FAMILY</scope>
    <scope>NOMENCLATURE</scope>
</reference>
<organism>
    <name type="scientific">Arabidopsis thaliana</name>
    <name type="common">Mouse-ear cress</name>
    <dbReference type="NCBI Taxonomy" id="3702"/>
    <lineage>
        <taxon>Eukaryota</taxon>
        <taxon>Viridiplantae</taxon>
        <taxon>Streptophyta</taxon>
        <taxon>Embryophyta</taxon>
        <taxon>Tracheophyta</taxon>
        <taxon>Spermatophyta</taxon>
        <taxon>Magnoliopsida</taxon>
        <taxon>eudicotyledons</taxon>
        <taxon>Gunneridae</taxon>
        <taxon>Pentapetalae</taxon>
        <taxon>rosids</taxon>
        <taxon>malvids</taxon>
        <taxon>Brassicales</taxon>
        <taxon>Brassicaceae</taxon>
        <taxon>Camelineae</taxon>
        <taxon>Arabidopsis</taxon>
    </lineage>
</organism>
<feature type="chain" id="PRO_0000074280" description="Dof zinc finger protein DOF3.4">
    <location>
        <begin position="1"/>
        <end position="253"/>
    </location>
</feature>
<feature type="zinc finger region" description="Dof-type" evidence="1">
    <location>
        <begin position="30"/>
        <end position="84"/>
    </location>
</feature>
<feature type="region of interest" description="Disordered" evidence="2">
    <location>
        <begin position="73"/>
        <end position="103"/>
    </location>
</feature>
<feature type="compositionally biased region" description="Low complexity" evidence="2">
    <location>
        <begin position="90"/>
        <end position="103"/>
    </location>
</feature>
<feature type="binding site" evidence="1">
    <location>
        <position position="32"/>
    </location>
    <ligand>
        <name>Zn(2+)</name>
        <dbReference type="ChEBI" id="CHEBI:29105"/>
    </ligand>
</feature>
<feature type="binding site" evidence="1">
    <location>
        <position position="35"/>
    </location>
    <ligand>
        <name>Zn(2+)</name>
        <dbReference type="ChEBI" id="CHEBI:29105"/>
    </ligand>
</feature>
<feature type="binding site" evidence="1">
    <location>
        <position position="57"/>
    </location>
    <ligand>
        <name>Zn(2+)</name>
        <dbReference type="ChEBI" id="CHEBI:29105"/>
    </ligand>
</feature>
<feature type="binding site" evidence="1">
    <location>
        <position position="60"/>
    </location>
    <ligand>
        <name>Zn(2+)</name>
        <dbReference type="ChEBI" id="CHEBI:29105"/>
    </ligand>
</feature>
<feature type="sequence conflict" description="In Ref. 1; CAA61485." evidence="5" ref="1">
    <original>A</original>
    <variation>R</variation>
    <location>
        <position position="155"/>
    </location>
</feature>
<accession>Q39088</accession>
<accession>Q9M2R8</accession>
<evidence type="ECO:0000255" key="1">
    <source>
        <dbReference type="PROSITE-ProRule" id="PRU00071"/>
    </source>
</evidence>
<evidence type="ECO:0000256" key="2">
    <source>
        <dbReference type="SAM" id="MobiDB-lite"/>
    </source>
</evidence>
<evidence type="ECO:0000269" key="3">
    <source>
    </source>
</evidence>
<evidence type="ECO:0000269" key="4">
    <source>
    </source>
</evidence>
<evidence type="ECO:0000305" key="5"/>
<dbReference type="EMBL" id="X89192">
    <property type="protein sequence ID" value="CAA61485.1"/>
    <property type="status" value="ALT_FRAME"/>
    <property type="molecule type" value="mRNA"/>
</dbReference>
<dbReference type="EMBL" id="AL132976">
    <property type="protein sequence ID" value="CAB88324.1"/>
    <property type="molecule type" value="Genomic_DNA"/>
</dbReference>
<dbReference type="EMBL" id="CP002686">
    <property type="protein sequence ID" value="AEE78664.1"/>
    <property type="molecule type" value="Genomic_DNA"/>
</dbReference>
<dbReference type="PIR" id="T46072">
    <property type="entry name" value="T46072"/>
</dbReference>
<dbReference type="RefSeq" id="NP_190610.1">
    <property type="nucleotide sequence ID" value="NM_114901.4"/>
</dbReference>
<dbReference type="BioGRID" id="9523">
    <property type="interactions" value="1"/>
</dbReference>
<dbReference type="FunCoup" id="Q39088">
    <property type="interactions" value="72"/>
</dbReference>
<dbReference type="IntAct" id="Q39088">
    <property type="interactions" value="2"/>
</dbReference>
<dbReference type="STRING" id="3702.Q39088"/>
<dbReference type="PaxDb" id="3702-AT3G50410.1"/>
<dbReference type="ProteomicsDB" id="222113"/>
<dbReference type="EnsemblPlants" id="AT3G50410.1">
    <property type="protein sequence ID" value="AT3G50410.1"/>
    <property type="gene ID" value="AT3G50410"/>
</dbReference>
<dbReference type="GeneID" id="824205"/>
<dbReference type="Gramene" id="AT3G50410.1">
    <property type="protein sequence ID" value="AT3G50410.1"/>
    <property type="gene ID" value="AT3G50410"/>
</dbReference>
<dbReference type="KEGG" id="ath:AT3G50410"/>
<dbReference type="Araport" id="AT3G50410"/>
<dbReference type="TAIR" id="AT3G50410">
    <property type="gene designation" value="OBP1"/>
</dbReference>
<dbReference type="eggNOG" id="ENOG502QUV1">
    <property type="taxonomic scope" value="Eukaryota"/>
</dbReference>
<dbReference type="HOGENOM" id="CLU_036438_6_0_1"/>
<dbReference type="InParanoid" id="Q39088"/>
<dbReference type="OMA" id="WHMESGE"/>
<dbReference type="PhylomeDB" id="Q39088"/>
<dbReference type="PRO" id="PR:Q39088"/>
<dbReference type="Proteomes" id="UP000006548">
    <property type="component" value="Chromosome 3"/>
</dbReference>
<dbReference type="ExpressionAtlas" id="Q39088">
    <property type="expression patterns" value="baseline and differential"/>
</dbReference>
<dbReference type="GO" id="GO:0005634">
    <property type="term" value="C:nucleus"/>
    <property type="evidence" value="ECO:0007669"/>
    <property type="project" value="UniProtKB-SubCell"/>
</dbReference>
<dbReference type="GO" id="GO:0003677">
    <property type="term" value="F:DNA binding"/>
    <property type="evidence" value="ECO:0000314"/>
    <property type="project" value="TAIR"/>
</dbReference>
<dbReference type="GO" id="GO:0003700">
    <property type="term" value="F:DNA-binding transcription factor activity"/>
    <property type="evidence" value="ECO:0000250"/>
    <property type="project" value="TAIR"/>
</dbReference>
<dbReference type="GO" id="GO:0000976">
    <property type="term" value="F:transcription cis-regulatory region binding"/>
    <property type="evidence" value="ECO:0000353"/>
    <property type="project" value="TAIR"/>
</dbReference>
<dbReference type="GO" id="GO:0008270">
    <property type="term" value="F:zinc ion binding"/>
    <property type="evidence" value="ECO:0000314"/>
    <property type="project" value="TAIR"/>
</dbReference>
<dbReference type="GO" id="GO:0042545">
    <property type="term" value="P:cell wall modification"/>
    <property type="evidence" value="ECO:0000315"/>
    <property type="project" value="TAIR"/>
</dbReference>
<dbReference type="GO" id="GO:0045787">
    <property type="term" value="P:positive regulation of cell cycle"/>
    <property type="evidence" value="ECO:0000315"/>
    <property type="project" value="TAIR"/>
</dbReference>
<dbReference type="GO" id="GO:0045893">
    <property type="term" value="P:positive regulation of DNA-templated transcription"/>
    <property type="evidence" value="ECO:0000304"/>
    <property type="project" value="TAIR"/>
</dbReference>
<dbReference type="GO" id="GO:0009733">
    <property type="term" value="P:response to auxin"/>
    <property type="evidence" value="ECO:0000270"/>
    <property type="project" value="TAIR"/>
</dbReference>
<dbReference type="GO" id="GO:0009751">
    <property type="term" value="P:response to salicylic acid"/>
    <property type="evidence" value="ECO:0000270"/>
    <property type="project" value="TAIR"/>
</dbReference>
<dbReference type="InterPro" id="IPR045174">
    <property type="entry name" value="Dof"/>
</dbReference>
<dbReference type="InterPro" id="IPR003851">
    <property type="entry name" value="Znf_Dof"/>
</dbReference>
<dbReference type="PANTHER" id="PTHR31992">
    <property type="entry name" value="DOF ZINC FINGER PROTEIN DOF1.4-RELATED"/>
    <property type="match status" value="1"/>
</dbReference>
<dbReference type="PANTHER" id="PTHR31992:SF12">
    <property type="entry name" value="DOF ZINC FINGER PROTEIN DOF3.4"/>
    <property type="match status" value="1"/>
</dbReference>
<dbReference type="Pfam" id="PF02701">
    <property type="entry name" value="Zn_ribbon_Dof"/>
    <property type="match status" value="1"/>
</dbReference>
<dbReference type="PROSITE" id="PS01361">
    <property type="entry name" value="ZF_DOF_1"/>
    <property type="match status" value="1"/>
</dbReference>
<dbReference type="PROSITE" id="PS50884">
    <property type="entry name" value="ZF_DOF_2"/>
    <property type="match status" value="1"/>
</dbReference>
<gene>
    <name type="primary">DOF3.4</name>
    <name type="synonym">OBP1</name>
    <name type="ordered locus">At3g50410</name>
    <name type="ORF">F11C1_250</name>
</gene>
<protein>
    <recommendedName>
        <fullName>Dof zinc finger protein DOF3.4</fullName>
        <shortName>AtDOF3.4</shortName>
    </recommendedName>
    <alternativeName>
        <fullName>OBF-binding protein 1</fullName>
    </alternativeName>
</protein>
<keyword id="KW-0238">DNA-binding</keyword>
<keyword id="KW-0479">Metal-binding</keyword>
<keyword id="KW-0539">Nucleus</keyword>
<keyword id="KW-1185">Reference proteome</keyword>
<keyword id="KW-0804">Transcription</keyword>
<keyword id="KW-0805">Transcription regulation</keyword>
<keyword id="KW-0862">Zinc</keyword>
<keyword id="KW-0863">Zinc-finger</keyword>
<name>DOF34_ARATH</name>
<comment type="function">
    <text>Transcription factor that binds specifically to a 5'-AA[AG]G-3' consensus core sequence. Enhances the DNA binding of OBF transcription factors to OCS elements.</text>
</comment>
<comment type="subunit">
    <text evidence="4">Interacts with OBF4 or OBF5.</text>
</comment>
<comment type="subcellular location">
    <subcellularLocation>
        <location evidence="5">Nucleus</location>
    </subcellularLocation>
</comment>
<comment type="tissue specificity">
    <text evidence="3 4">Constitutively expressed in the whole plant.</text>
</comment>
<comment type="induction">
    <text evidence="3">By auxin and salicylic acid (SA).</text>
</comment>
<comment type="sequence caution" evidence="5">
    <conflict type="frameshift">
        <sequence resource="EMBL-CDS" id="CAA61485"/>
    </conflict>
</comment>
<sequence length="253" mass="26382">MPTSDSGEPRRIAMKPNGVTVPISDQQEQLPCPRCDSSNTKFCYYNNYNFSQPRHFCKACRRYWTHGGTLRDVPVGGGTRKSAKRSRTCSNSSSSSVSGVVSNSNGVPLQTTPVLFPQSSISNGVTHTVTESDGKGSALSLCGSFTSTLLNHNAAATATHGSGSVIGIGGFGIGLGSGFDDVSFGLGRAMWPFSTVGTATTTNVGSNGGHHAVPMPATWQFEGLESNAGGGFVSGEYFAWPDLSITTPGNSLK</sequence>
<proteinExistence type="evidence at protein level"/>